<accession>B3Q9W5</accession>
<comment type="function">
    <text evidence="1">Allows the formation of correctly charged Gln-tRNA(Gln) through the transamidation of misacylated Glu-tRNA(Gln) in organisms which lack glutaminyl-tRNA synthetase. The reaction takes place in the presence of glutamine and ATP through an activated gamma-phospho-Glu-tRNA(Gln).</text>
</comment>
<comment type="catalytic activity">
    <reaction evidence="1">
        <text>L-glutamyl-tRNA(Gln) + L-glutamine + ATP + H2O = L-glutaminyl-tRNA(Gln) + L-glutamate + ADP + phosphate + H(+)</text>
        <dbReference type="Rhea" id="RHEA:17521"/>
        <dbReference type="Rhea" id="RHEA-COMP:9681"/>
        <dbReference type="Rhea" id="RHEA-COMP:9684"/>
        <dbReference type="ChEBI" id="CHEBI:15377"/>
        <dbReference type="ChEBI" id="CHEBI:15378"/>
        <dbReference type="ChEBI" id="CHEBI:29985"/>
        <dbReference type="ChEBI" id="CHEBI:30616"/>
        <dbReference type="ChEBI" id="CHEBI:43474"/>
        <dbReference type="ChEBI" id="CHEBI:58359"/>
        <dbReference type="ChEBI" id="CHEBI:78520"/>
        <dbReference type="ChEBI" id="CHEBI:78521"/>
        <dbReference type="ChEBI" id="CHEBI:456216"/>
        <dbReference type="EC" id="6.3.5.7"/>
    </reaction>
</comment>
<comment type="subunit">
    <text evidence="1">Heterotrimer of A, B and C subunits.</text>
</comment>
<comment type="similarity">
    <text evidence="1">Belongs to the amidase family. GatA subfamily.</text>
</comment>
<dbReference type="EC" id="6.3.5.7" evidence="1"/>
<dbReference type="EMBL" id="CP001096">
    <property type="protein sequence ID" value="ACF02018.1"/>
    <property type="molecule type" value="Genomic_DNA"/>
</dbReference>
<dbReference type="RefSeq" id="WP_011158652.1">
    <property type="nucleotide sequence ID" value="NC_011004.1"/>
</dbReference>
<dbReference type="SMR" id="B3Q9W5"/>
<dbReference type="GeneID" id="66894189"/>
<dbReference type="KEGG" id="rpt:Rpal_3517"/>
<dbReference type="HOGENOM" id="CLU_009600_0_3_5"/>
<dbReference type="OrthoDB" id="9811471at2"/>
<dbReference type="Proteomes" id="UP000001725">
    <property type="component" value="Chromosome"/>
</dbReference>
<dbReference type="GO" id="GO:0030956">
    <property type="term" value="C:glutamyl-tRNA(Gln) amidotransferase complex"/>
    <property type="evidence" value="ECO:0007669"/>
    <property type="project" value="InterPro"/>
</dbReference>
<dbReference type="GO" id="GO:0005524">
    <property type="term" value="F:ATP binding"/>
    <property type="evidence" value="ECO:0007669"/>
    <property type="project" value="UniProtKB-KW"/>
</dbReference>
<dbReference type="GO" id="GO:0050567">
    <property type="term" value="F:glutaminyl-tRNA synthase (glutamine-hydrolyzing) activity"/>
    <property type="evidence" value="ECO:0007669"/>
    <property type="project" value="UniProtKB-UniRule"/>
</dbReference>
<dbReference type="GO" id="GO:0006412">
    <property type="term" value="P:translation"/>
    <property type="evidence" value="ECO:0007669"/>
    <property type="project" value="UniProtKB-UniRule"/>
</dbReference>
<dbReference type="Gene3D" id="3.90.1300.10">
    <property type="entry name" value="Amidase signature (AS) domain"/>
    <property type="match status" value="1"/>
</dbReference>
<dbReference type="HAMAP" id="MF_00120">
    <property type="entry name" value="GatA"/>
    <property type="match status" value="1"/>
</dbReference>
<dbReference type="InterPro" id="IPR000120">
    <property type="entry name" value="Amidase"/>
</dbReference>
<dbReference type="InterPro" id="IPR020556">
    <property type="entry name" value="Amidase_CS"/>
</dbReference>
<dbReference type="InterPro" id="IPR023631">
    <property type="entry name" value="Amidase_dom"/>
</dbReference>
<dbReference type="InterPro" id="IPR036928">
    <property type="entry name" value="AS_sf"/>
</dbReference>
<dbReference type="InterPro" id="IPR004412">
    <property type="entry name" value="GatA"/>
</dbReference>
<dbReference type="NCBIfam" id="TIGR00132">
    <property type="entry name" value="gatA"/>
    <property type="match status" value="1"/>
</dbReference>
<dbReference type="PANTHER" id="PTHR11895:SF151">
    <property type="entry name" value="GLUTAMYL-TRNA(GLN) AMIDOTRANSFERASE SUBUNIT A"/>
    <property type="match status" value="1"/>
</dbReference>
<dbReference type="PANTHER" id="PTHR11895">
    <property type="entry name" value="TRANSAMIDASE"/>
    <property type="match status" value="1"/>
</dbReference>
<dbReference type="Pfam" id="PF01425">
    <property type="entry name" value="Amidase"/>
    <property type="match status" value="1"/>
</dbReference>
<dbReference type="SUPFAM" id="SSF75304">
    <property type="entry name" value="Amidase signature (AS) enzymes"/>
    <property type="match status" value="1"/>
</dbReference>
<dbReference type="PROSITE" id="PS00571">
    <property type="entry name" value="AMIDASES"/>
    <property type="match status" value="1"/>
</dbReference>
<sequence length="492" mass="51977">MTDLTSLTLAEARDGLANKSFTAVELTDAHLAAIEAARVLNAYVLETPDQARQMAKAADAQIAKGEGGPLAGLPLGIKDLFATKGERTTACSKILGDFKPTYESTVTTQLWRDGAVLLGKLNNDEFAMGSSNETSCFGPVINPWRRAGSDAKLVPGGSSGGSAAAVAAGLCLGATATDTGGSIRQPAAFTGTVGIKPTYGRCSRWGIVAFASSLDQAGPIARTVRDSAILLRSMAGHDPKDTTSVDRPVPNYEAAVGGSVKGMKIGIPKEYRLDGMPAEIEKLWSQGAEWLKAAGAELVEVSLPHTKYALPAYYIVAPAEASSNLARYDGVRYGARVNGRNIIEMYENTRAAGFGAEVKRRIMIGTYVLSAGYYDAYYLRAQKVRTLIKRDFEQCFDQGVSAILTPATPSAAFGIGEKGGADPVEMYLNDIFTVTVNMAGLPGIAVPAGSDSQGLPLGLQLIGRPFDEDTLFSLGEVIEQAAGRFTPAKWWA</sequence>
<protein>
    <recommendedName>
        <fullName evidence="1">Glutamyl-tRNA(Gln) amidotransferase subunit A</fullName>
        <shortName evidence="1">Glu-ADT subunit A</shortName>
        <ecNumber evidence="1">6.3.5.7</ecNumber>
    </recommendedName>
</protein>
<proteinExistence type="inferred from homology"/>
<feature type="chain" id="PRO_1000095166" description="Glutamyl-tRNA(Gln) amidotransferase subunit A">
    <location>
        <begin position="1"/>
        <end position="492"/>
    </location>
</feature>
<feature type="active site" description="Charge relay system" evidence="1">
    <location>
        <position position="78"/>
    </location>
</feature>
<feature type="active site" description="Charge relay system" evidence="1">
    <location>
        <position position="158"/>
    </location>
</feature>
<feature type="active site" description="Acyl-ester intermediate" evidence="1">
    <location>
        <position position="182"/>
    </location>
</feature>
<reference key="1">
    <citation type="submission" date="2008-05" db="EMBL/GenBank/DDBJ databases">
        <title>Complete sequence of Rhodopseudomonas palustris TIE-1.</title>
        <authorList>
            <consortium name="US DOE Joint Genome Institute"/>
            <person name="Lucas S."/>
            <person name="Copeland A."/>
            <person name="Lapidus A."/>
            <person name="Glavina del Rio T."/>
            <person name="Dalin E."/>
            <person name="Tice H."/>
            <person name="Pitluck S."/>
            <person name="Chain P."/>
            <person name="Malfatti S."/>
            <person name="Shin M."/>
            <person name="Vergez L."/>
            <person name="Lang D."/>
            <person name="Schmutz J."/>
            <person name="Larimer F."/>
            <person name="Land M."/>
            <person name="Hauser L."/>
            <person name="Kyrpides N."/>
            <person name="Mikhailova N."/>
            <person name="Emerson D."/>
            <person name="Newman D.K."/>
            <person name="Roden E."/>
            <person name="Richardson P."/>
        </authorList>
    </citation>
    <scope>NUCLEOTIDE SEQUENCE [LARGE SCALE GENOMIC DNA]</scope>
    <source>
        <strain>TIE-1</strain>
    </source>
</reference>
<gene>
    <name evidence="1" type="primary">gatA</name>
    <name type="ordered locus">Rpal_3517</name>
</gene>
<evidence type="ECO:0000255" key="1">
    <source>
        <dbReference type="HAMAP-Rule" id="MF_00120"/>
    </source>
</evidence>
<organism>
    <name type="scientific">Rhodopseudomonas palustris (strain TIE-1)</name>
    <dbReference type="NCBI Taxonomy" id="395960"/>
    <lineage>
        <taxon>Bacteria</taxon>
        <taxon>Pseudomonadati</taxon>
        <taxon>Pseudomonadota</taxon>
        <taxon>Alphaproteobacteria</taxon>
        <taxon>Hyphomicrobiales</taxon>
        <taxon>Nitrobacteraceae</taxon>
        <taxon>Rhodopseudomonas</taxon>
    </lineage>
</organism>
<name>GATA_RHOPT</name>
<keyword id="KW-0067">ATP-binding</keyword>
<keyword id="KW-0436">Ligase</keyword>
<keyword id="KW-0547">Nucleotide-binding</keyword>
<keyword id="KW-0648">Protein biosynthesis</keyword>